<proteinExistence type="inferred from homology"/>
<sequence>MPRDREYDQWGYSGTRRDGGGRYGYRDRSRDERDRFRDVRDRDRDRDRDRERDRGGYRQDPRDRRYSRSRERERRGSGSRDRSRDRSRDRSRDAHRPPPSGRPHQPSGHDSTKSSNSMSETSSTSQVTGTTPNTTNATPSQAEIDAKKAAKLAKVAEWKRKKELERSKSASASPAPSTAPASPKAGFSMSGLSGLRKATDQGQVKRKMFFGGDSDEEDAGRKPAKLLKKLGEKEGSGKSEGKGRGGSQSEAKNASEKNGAASEPAEVDPLDAYMSSLTLPTTTSVSIADSTPLENLNVWEQVDTLEKSQDPTLDLSALSKRKEIAIVDHSKQVYEDFRRQFYVESSELADMTEAETNELRLSLDGIKIRGKDCPKPISKWTQLGLPGPTMGVLNDLRYDKPTSIQAQAIPAVMSGRDVISVAKTGSGKTLAFLLPMLRHIKHRVGVETHTTTLSGASSHPLGVIITPTRELCVQIYRDLRPFLAALELTAVCAYGGSPIKDQIAALKKGTHIIVCTPGRMIDLLAANQGRVLSLSRVTFLVIDEADRMFDMGFEPQVLKLTQSIRPDRQTVLFSATFPKKMEQLARRVLSKRSSDSLGPIEIIVGARSVVASEITQFVEVFQNEKSKFPRLLEVLGKYFAQGFFDEQSEGRVGTGESAATPIPNPKCLIFVERQESADSLLKELIQSGYPCLSIHGGKEQADRDQAISDFKSGLVSVLIATSVAARGLDVKGLGLVVNWDSPNHMEDYVHRVGRTGRAGQKGTALTFLLSDQERLAAEISRAIKSSGNAPPAPVQLMTERFEFKVRSGTEKRHMYGFSGKGLERLQDERDATREHERRAYEGDEAGEAETESSTPAASTANTDIIPKPVIVVTPPDSKSPTTAYHTTLQINDFPQQARYRASSNTSVSRVIANTGCSITAKGEYYPPGRIPGPKDEPKLFILIEGTSERAVKLAHHELSELLVSGLVKGARYQV</sequence>
<feature type="chain" id="PRO_0000232368" description="Pre-mRNA-processing ATP-dependent RNA helicase PRP5">
    <location>
        <begin position="1"/>
        <end position="974"/>
    </location>
</feature>
<feature type="domain" description="Helicase ATP-binding" evidence="2">
    <location>
        <begin position="409"/>
        <end position="595"/>
    </location>
</feature>
<feature type="domain" description="Helicase C-terminal" evidence="3">
    <location>
        <begin position="654"/>
        <end position="800"/>
    </location>
</feature>
<feature type="region of interest" description="Disordered" evidence="4">
    <location>
        <begin position="1"/>
        <end position="267"/>
    </location>
</feature>
<feature type="region of interest" description="Disordered" evidence="4">
    <location>
        <begin position="815"/>
        <end position="867"/>
    </location>
</feature>
<feature type="short sequence motif" description="Q motif">
    <location>
        <begin position="378"/>
        <end position="406"/>
    </location>
</feature>
<feature type="short sequence motif" description="DEAD box">
    <location>
        <begin position="543"/>
        <end position="546"/>
    </location>
</feature>
<feature type="compositionally biased region" description="Basic and acidic residues" evidence="4">
    <location>
        <begin position="15"/>
        <end position="96"/>
    </location>
</feature>
<feature type="compositionally biased region" description="Low complexity" evidence="4">
    <location>
        <begin position="113"/>
        <end position="142"/>
    </location>
</feature>
<feature type="compositionally biased region" description="Basic and acidic residues" evidence="4">
    <location>
        <begin position="144"/>
        <end position="168"/>
    </location>
</feature>
<feature type="compositionally biased region" description="Low complexity" evidence="4">
    <location>
        <begin position="169"/>
        <end position="185"/>
    </location>
</feature>
<feature type="compositionally biased region" description="Basic and acidic residues" evidence="4">
    <location>
        <begin position="229"/>
        <end position="243"/>
    </location>
</feature>
<feature type="compositionally biased region" description="Basic and acidic residues" evidence="4">
    <location>
        <begin position="821"/>
        <end position="841"/>
    </location>
</feature>
<feature type="compositionally biased region" description="Polar residues" evidence="4">
    <location>
        <begin position="851"/>
        <end position="862"/>
    </location>
</feature>
<feature type="binding site" evidence="2">
    <location>
        <begin position="422"/>
        <end position="429"/>
    </location>
    <ligand>
        <name>ATP</name>
        <dbReference type="ChEBI" id="CHEBI:30616"/>
    </ligand>
</feature>
<name>PRP5_YARLI</name>
<gene>
    <name type="primary">PRP5</name>
    <name type="ordered locus">YALI0C05368g</name>
</gene>
<reference key="1">
    <citation type="journal article" date="2004" name="Nature">
        <title>Genome evolution in yeasts.</title>
        <authorList>
            <person name="Dujon B."/>
            <person name="Sherman D."/>
            <person name="Fischer G."/>
            <person name="Durrens P."/>
            <person name="Casaregola S."/>
            <person name="Lafontaine I."/>
            <person name="de Montigny J."/>
            <person name="Marck C."/>
            <person name="Neuveglise C."/>
            <person name="Talla E."/>
            <person name="Goffard N."/>
            <person name="Frangeul L."/>
            <person name="Aigle M."/>
            <person name="Anthouard V."/>
            <person name="Babour A."/>
            <person name="Barbe V."/>
            <person name="Barnay S."/>
            <person name="Blanchin S."/>
            <person name="Beckerich J.-M."/>
            <person name="Beyne E."/>
            <person name="Bleykasten C."/>
            <person name="Boisrame A."/>
            <person name="Boyer J."/>
            <person name="Cattolico L."/>
            <person name="Confanioleri F."/>
            <person name="de Daruvar A."/>
            <person name="Despons L."/>
            <person name="Fabre E."/>
            <person name="Fairhead C."/>
            <person name="Ferry-Dumazet H."/>
            <person name="Groppi A."/>
            <person name="Hantraye F."/>
            <person name="Hennequin C."/>
            <person name="Jauniaux N."/>
            <person name="Joyet P."/>
            <person name="Kachouri R."/>
            <person name="Kerrest A."/>
            <person name="Koszul R."/>
            <person name="Lemaire M."/>
            <person name="Lesur I."/>
            <person name="Ma L."/>
            <person name="Muller H."/>
            <person name="Nicaud J.-M."/>
            <person name="Nikolski M."/>
            <person name="Oztas S."/>
            <person name="Ozier-Kalogeropoulos O."/>
            <person name="Pellenz S."/>
            <person name="Potier S."/>
            <person name="Richard G.-F."/>
            <person name="Straub M.-L."/>
            <person name="Suleau A."/>
            <person name="Swennen D."/>
            <person name="Tekaia F."/>
            <person name="Wesolowski-Louvel M."/>
            <person name="Westhof E."/>
            <person name="Wirth B."/>
            <person name="Zeniou-Meyer M."/>
            <person name="Zivanovic Y."/>
            <person name="Bolotin-Fukuhara M."/>
            <person name="Thierry A."/>
            <person name="Bouchier C."/>
            <person name="Caudron B."/>
            <person name="Scarpelli C."/>
            <person name="Gaillardin C."/>
            <person name="Weissenbach J."/>
            <person name="Wincker P."/>
            <person name="Souciet J.-L."/>
        </authorList>
    </citation>
    <scope>NUCLEOTIDE SEQUENCE [LARGE SCALE GENOMIC DNA]</scope>
    <source>
        <strain>CLIB 122 / E 150</strain>
    </source>
</reference>
<comment type="function">
    <text evidence="1">ATP-dependent RNA helicase involved spliceosome assembly and in nuclear splicing. Catalyzes an ATP-dependent conformational change of U2 snRNP. Bridges U1 and U2 snRNPs and enables stable U2 snRNP association with intron RNA (By similarity).</text>
</comment>
<comment type="catalytic activity">
    <reaction>
        <text>ATP + H2O = ADP + phosphate + H(+)</text>
        <dbReference type="Rhea" id="RHEA:13065"/>
        <dbReference type="ChEBI" id="CHEBI:15377"/>
        <dbReference type="ChEBI" id="CHEBI:15378"/>
        <dbReference type="ChEBI" id="CHEBI:30616"/>
        <dbReference type="ChEBI" id="CHEBI:43474"/>
        <dbReference type="ChEBI" id="CHEBI:456216"/>
        <dbReference type="EC" id="3.6.4.13"/>
    </reaction>
</comment>
<comment type="subcellular location">
    <subcellularLocation>
        <location evidence="1">Nucleus</location>
    </subcellularLocation>
</comment>
<comment type="domain">
    <text>The Q motif is unique to and characteristic of the DEAD box family of RNA helicases and controls ATP binding and hydrolysis.</text>
</comment>
<comment type="similarity">
    <text evidence="5">Belongs to the DEAD box helicase family. DDX46/PRP5 subfamily.</text>
</comment>
<organism>
    <name type="scientific">Yarrowia lipolytica (strain CLIB 122 / E 150)</name>
    <name type="common">Yeast</name>
    <name type="synonym">Candida lipolytica</name>
    <dbReference type="NCBI Taxonomy" id="284591"/>
    <lineage>
        <taxon>Eukaryota</taxon>
        <taxon>Fungi</taxon>
        <taxon>Dikarya</taxon>
        <taxon>Ascomycota</taxon>
        <taxon>Saccharomycotina</taxon>
        <taxon>Dipodascomycetes</taxon>
        <taxon>Dipodascales</taxon>
        <taxon>Dipodascales incertae sedis</taxon>
        <taxon>Yarrowia</taxon>
    </lineage>
</organism>
<accession>Q6CCZ1</accession>
<evidence type="ECO:0000250" key="1"/>
<evidence type="ECO:0000255" key="2">
    <source>
        <dbReference type="PROSITE-ProRule" id="PRU00541"/>
    </source>
</evidence>
<evidence type="ECO:0000255" key="3">
    <source>
        <dbReference type="PROSITE-ProRule" id="PRU00542"/>
    </source>
</evidence>
<evidence type="ECO:0000256" key="4">
    <source>
        <dbReference type="SAM" id="MobiDB-lite"/>
    </source>
</evidence>
<evidence type="ECO:0000305" key="5"/>
<keyword id="KW-0067">ATP-binding</keyword>
<keyword id="KW-0347">Helicase</keyword>
<keyword id="KW-0378">Hydrolase</keyword>
<keyword id="KW-0507">mRNA processing</keyword>
<keyword id="KW-0508">mRNA splicing</keyword>
<keyword id="KW-0547">Nucleotide-binding</keyword>
<keyword id="KW-0539">Nucleus</keyword>
<keyword id="KW-1185">Reference proteome</keyword>
<dbReference type="EC" id="3.6.4.13"/>
<dbReference type="EMBL" id="CR382129">
    <property type="protein sequence ID" value="CAG81772.1"/>
    <property type="molecule type" value="Genomic_DNA"/>
</dbReference>
<dbReference type="RefSeq" id="XP_501471.1">
    <property type="nucleotide sequence ID" value="XM_501471.1"/>
</dbReference>
<dbReference type="SMR" id="Q6CCZ1"/>
<dbReference type="FunCoup" id="Q6CCZ1">
    <property type="interactions" value="1072"/>
</dbReference>
<dbReference type="STRING" id="284591.Q6CCZ1"/>
<dbReference type="EnsemblFungi" id="CAG81772">
    <property type="protein sequence ID" value="CAG81772"/>
    <property type="gene ID" value="YALI0_C05368g"/>
</dbReference>
<dbReference type="KEGG" id="yli:2909377"/>
<dbReference type="VEuPathDB" id="FungiDB:YALI0_C05368g"/>
<dbReference type="HOGENOM" id="CLU_003041_0_3_1"/>
<dbReference type="InParanoid" id="Q6CCZ1"/>
<dbReference type="OrthoDB" id="98226at4891"/>
<dbReference type="Proteomes" id="UP000001300">
    <property type="component" value="Chromosome C"/>
</dbReference>
<dbReference type="GO" id="GO:0005634">
    <property type="term" value="C:nucleus"/>
    <property type="evidence" value="ECO:0000318"/>
    <property type="project" value="GO_Central"/>
</dbReference>
<dbReference type="GO" id="GO:0005524">
    <property type="term" value="F:ATP binding"/>
    <property type="evidence" value="ECO:0007669"/>
    <property type="project" value="UniProtKB-KW"/>
</dbReference>
<dbReference type="GO" id="GO:0016887">
    <property type="term" value="F:ATP hydrolysis activity"/>
    <property type="evidence" value="ECO:0007669"/>
    <property type="project" value="RHEA"/>
</dbReference>
<dbReference type="GO" id="GO:0003676">
    <property type="term" value="F:nucleic acid binding"/>
    <property type="evidence" value="ECO:0007669"/>
    <property type="project" value="InterPro"/>
</dbReference>
<dbReference type="GO" id="GO:0003724">
    <property type="term" value="F:RNA helicase activity"/>
    <property type="evidence" value="ECO:0007669"/>
    <property type="project" value="UniProtKB-EC"/>
</dbReference>
<dbReference type="GO" id="GO:0000398">
    <property type="term" value="P:mRNA splicing, via spliceosome"/>
    <property type="evidence" value="ECO:0000318"/>
    <property type="project" value="GO_Central"/>
</dbReference>
<dbReference type="CDD" id="cd22474">
    <property type="entry name" value="KH-I_PRP5_like"/>
    <property type="match status" value="1"/>
</dbReference>
<dbReference type="CDD" id="cd18787">
    <property type="entry name" value="SF2_C_DEAD"/>
    <property type="match status" value="1"/>
</dbReference>
<dbReference type="FunFam" id="3.40.50.300:FF:000079">
    <property type="entry name" value="probable ATP-dependent RNA helicase DDX17"/>
    <property type="match status" value="1"/>
</dbReference>
<dbReference type="Gene3D" id="3.40.50.300">
    <property type="entry name" value="P-loop containing nucleotide triphosphate hydrolases"/>
    <property type="match status" value="2"/>
</dbReference>
<dbReference type="InterPro" id="IPR011545">
    <property type="entry name" value="DEAD/DEAH_box_helicase_dom"/>
</dbReference>
<dbReference type="InterPro" id="IPR014001">
    <property type="entry name" value="Helicase_ATP-bd"/>
</dbReference>
<dbReference type="InterPro" id="IPR001650">
    <property type="entry name" value="Helicase_C-like"/>
</dbReference>
<dbReference type="InterPro" id="IPR027417">
    <property type="entry name" value="P-loop_NTPase"/>
</dbReference>
<dbReference type="InterPro" id="IPR000629">
    <property type="entry name" value="RNA-helicase_DEAD-box_CS"/>
</dbReference>
<dbReference type="InterPro" id="IPR014014">
    <property type="entry name" value="RNA_helicase_DEAD_Q_motif"/>
</dbReference>
<dbReference type="PANTHER" id="PTHR47958">
    <property type="entry name" value="ATP-DEPENDENT RNA HELICASE DBP3"/>
    <property type="match status" value="1"/>
</dbReference>
<dbReference type="Pfam" id="PF00270">
    <property type="entry name" value="DEAD"/>
    <property type="match status" value="1"/>
</dbReference>
<dbReference type="Pfam" id="PF00271">
    <property type="entry name" value="Helicase_C"/>
    <property type="match status" value="1"/>
</dbReference>
<dbReference type="SMART" id="SM00487">
    <property type="entry name" value="DEXDc"/>
    <property type="match status" value="1"/>
</dbReference>
<dbReference type="SMART" id="SM00490">
    <property type="entry name" value="HELICc"/>
    <property type="match status" value="1"/>
</dbReference>
<dbReference type="SUPFAM" id="SSF52540">
    <property type="entry name" value="P-loop containing nucleoside triphosphate hydrolases"/>
    <property type="match status" value="2"/>
</dbReference>
<dbReference type="PROSITE" id="PS00039">
    <property type="entry name" value="DEAD_ATP_HELICASE"/>
    <property type="match status" value="1"/>
</dbReference>
<dbReference type="PROSITE" id="PS51192">
    <property type="entry name" value="HELICASE_ATP_BIND_1"/>
    <property type="match status" value="1"/>
</dbReference>
<dbReference type="PROSITE" id="PS51194">
    <property type="entry name" value="HELICASE_CTER"/>
    <property type="match status" value="1"/>
</dbReference>
<dbReference type="PROSITE" id="PS51195">
    <property type="entry name" value="Q_MOTIF"/>
    <property type="match status" value="1"/>
</dbReference>
<protein>
    <recommendedName>
        <fullName>Pre-mRNA-processing ATP-dependent RNA helicase PRP5</fullName>
        <ecNumber>3.6.4.13</ecNumber>
    </recommendedName>
</protein>